<accession>O24150</accession>
<keyword id="KW-0438">Lignin biosynthesis</keyword>
<keyword id="KW-0460">Magnesium</keyword>
<keyword id="KW-0479">Metal-binding</keyword>
<keyword id="KW-0489">Methyltransferase</keyword>
<keyword id="KW-1185">Reference proteome</keyword>
<keyword id="KW-0949">S-adenosyl-L-methionine</keyword>
<keyword id="KW-0808">Transferase</keyword>
<dbReference type="EC" id="2.1.1.104"/>
<dbReference type="EMBL" id="U62735">
    <property type="protein sequence ID" value="AAC49915.1"/>
    <property type="molecule type" value="mRNA"/>
</dbReference>
<dbReference type="PIR" id="T03798">
    <property type="entry name" value="T03798"/>
</dbReference>
<dbReference type="RefSeq" id="NP_001312396.1">
    <property type="nucleotide sequence ID" value="NM_001325467.1"/>
</dbReference>
<dbReference type="SMR" id="O24150"/>
<dbReference type="STRING" id="4097.O24150"/>
<dbReference type="PaxDb" id="4097-O24150"/>
<dbReference type="GeneID" id="107789328"/>
<dbReference type="KEGG" id="nta:107789328"/>
<dbReference type="OMA" id="CDITDRW"/>
<dbReference type="OrthoDB" id="1213027at2759"/>
<dbReference type="PhylomeDB" id="O24150"/>
<dbReference type="UniPathway" id="UPA00711"/>
<dbReference type="Proteomes" id="UP000084051">
    <property type="component" value="Unplaced"/>
</dbReference>
<dbReference type="GO" id="GO:0042409">
    <property type="term" value="F:caffeoyl-CoA O-methyltransferase activity"/>
    <property type="evidence" value="ECO:0007669"/>
    <property type="project" value="UniProtKB-EC"/>
</dbReference>
<dbReference type="GO" id="GO:0046872">
    <property type="term" value="F:metal ion binding"/>
    <property type="evidence" value="ECO:0007669"/>
    <property type="project" value="UniProtKB-KW"/>
</dbReference>
<dbReference type="GO" id="GO:0008757">
    <property type="term" value="F:S-adenosylmethionine-dependent methyltransferase activity"/>
    <property type="evidence" value="ECO:0000318"/>
    <property type="project" value="GO_Central"/>
</dbReference>
<dbReference type="GO" id="GO:0009809">
    <property type="term" value="P:lignin biosynthetic process"/>
    <property type="evidence" value="ECO:0007669"/>
    <property type="project" value="UniProtKB-KW"/>
</dbReference>
<dbReference type="GO" id="GO:0032259">
    <property type="term" value="P:methylation"/>
    <property type="evidence" value="ECO:0007669"/>
    <property type="project" value="UniProtKB-KW"/>
</dbReference>
<dbReference type="CDD" id="cd02440">
    <property type="entry name" value="AdoMet_MTases"/>
    <property type="match status" value="1"/>
</dbReference>
<dbReference type="FunFam" id="3.40.50.150:FF:000147">
    <property type="entry name" value="Caffeoyl-CoA O-methyltransferase 1"/>
    <property type="match status" value="1"/>
</dbReference>
<dbReference type="Gene3D" id="3.40.50.150">
    <property type="entry name" value="Vaccinia Virus protein VP39"/>
    <property type="match status" value="1"/>
</dbReference>
<dbReference type="InterPro" id="IPR050362">
    <property type="entry name" value="Cation-dep_OMT"/>
</dbReference>
<dbReference type="InterPro" id="IPR029063">
    <property type="entry name" value="SAM-dependent_MTases_sf"/>
</dbReference>
<dbReference type="InterPro" id="IPR002935">
    <property type="entry name" value="SAM_O-MeTrfase"/>
</dbReference>
<dbReference type="PANTHER" id="PTHR10509:SF94">
    <property type="entry name" value="CAFFEOYL-COA O-METHYLTRANSFERASE 3"/>
    <property type="match status" value="1"/>
</dbReference>
<dbReference type="PANTHER" id="PTHR10509">
    <property type="entry name" value="O-METHYLTRANSFERASE-RELATED"/>
    <property type="match status" value="1"/>
</dbReference>
<dbReference type="Pfam" id="PF01596">
    <property type="entry name" value="Methyltransf_3"/>
    <property type="match status" value="1"/>
</dbReference>
<dbReference type="SUPFAM" id="SSF53335">
    <property type="entry name" value="S-adenosyl-L-methionine-dependent methyltransferases"/>
    <property type="match status" value="1"/>
</dbReference>
<dbReference type="PROSITE" id="PS51682">
    <property type="entry name" value="SAM_OMT_I"/>
    <property type="match status" value="1"/>
</dbReference>
<comment type="function">
    <text>Methylates caffeoyl-CoA to feruloyl-CoA and 5-hydroxyferuloyl-CoA to sinapoyl-CoA. Plays a role in the synthesis of feruloylated polysaccharides. Involved in the reinforcement of the plant cell wall. Also involved in the responding to wounding or pathogen challenge by the increased formation of cell wall-bound ferulic acid polymers. Also methylates free caffeic and 5-hydroxyferulic acids.</text>
</comment>
<comment type="catalytic activity">
    <reaction>
        <text>(E)-caffeoyl-CoA + S-adenosyl-L-methionine = (E)-feruloyl-CoA + S-adenosyl-L-homocysteine + H(+)</text>
        <dbReference type="Rhea" id="RHEA:16925"/>
        <dbReference type="ChEBI" id="CHEBI:15378"/>
        <dbReference type="ChEBI" id="CHEBI:57856"/>
        <dbReference type="ChEBI" id="CHEBI:59789"/>
        <dbReference type="ChEBI" id="CHEBI:87136"/>
        <dbReference type="ChEBI" id="CHEBI:87305"/>
        <dbReference type="EC" id="2.1.1.104"/>
    </reaction>
</comment>
<comment type="cofactor">
    <cofactor evidence="1">
        <name>Mg(2+)</name>
        <dbReference type="ChEBI" id="CHEBI:18420"/>
    </cofactor>
    <text evidence="1">Binds 1 Mg(2+) ion per subunit.</text>
</comment>
<comment type="pathway">
    <text>Aromatic compound metabolism; phenylpropanoid biosynthesis.</text>
</comment>
<comment type="tissue specificity">
    <text evidence="4">Mostly expressed in the bottom and middle parts of the stems.</text>
</comment>
<comment type="induction">
    <text evidence="4">By wounding and viral infection.</text>
</comment>
<comment type="similarity">
    <text evidence="3">Belongs to the class I-like SAM-binding methyltransferase superfamily. Cation-dependent O-methyltransferase family. CCoAMT subfamily.</text>
</comment>
<feature type="chain" id="PRO_0000165699" description="Caffeoyl-CoA O-methyltransferase 3">
    <location>
        <begin position="1"/>
        <end position="242"/>
    </location>
</feature>
<feature type="binding site" evidence="2">
    <location>
        <position position="16"/>
    </location>
    <ligand>
        <name>substrate</name>
    </ligand>
</feature>
<feature type="binding site" evidence="3">
    <location>
        <position position="58"/>
    </location>
    <ligand>
        <name>S-adenosyl-L-methionine</name>
        <dbReference type="ChEBI" id="CHEBI:59789"/>
    </ligand>
</feature>
<feature type="binding site" evidence="3">
    <location>
        <position position="80"/>
    </location>
    <ligand>
        <name>S-adenosyl-L-methionine</name>
        <dbReference type="ChEBI" id="CHEBI:59789"/>
    </ligand>
</feature>
<feature type="binding site" evidence="3">
    <location>
        <begin position="82"/>
        <end position="83"/>
    </location>
    <ligand>
        <name>S-adenosyl-L-methionine</name>
        <dbReference type="ChEBI" id="CHEBI:59789"/>
    </ligand>
</feature>
<feature type="binding site" evidence="3">
    <location>
        <position position="88"/>
    </location>
    <ligand>
        <name>S-adenosyl-L-methionine</name>
        <dbReference type="ChEBI" id="CHEBI:59789"/>
    </ligand>
</feature>
<feature type="binding site" evidence="3">
    <location>
        <position position="106"/>
    </location>
    <ligand>
        <name>S-adenosyl-L-methionine</name>
        <dbReference type="ChEBI" id="CHEBI:59789"/>
    </ligand>
</feature>
<feature type="binding site" evidence="3">
    <location>
        <position position="135"/>
    </location>
    <ligand>
        <name>S-adenosyl-L-methionine</name>
        <dbReference type="ChEBI" id="CHEBI:59789"/>
    </ligand>
</feature>
<feature type="binding site" evidence="3">
    <location>
        <position position="158"/>
    </location>
    <ligand>
        <name>a divalent metal cation</name>
        <dbReference type="ChEBI" id="CHEBI:60240"/>
    </ligand>
</feature>
<feature type="binding site" evidence="2">
    <location>
        <position position="158"/>
    </location>
    <ligand>
        <name>substrate</name>
    </ligand>
</feature>
<feature type="binding site" evidence="3">
    <location>
        <position position="160"/>
    </location>
    <ligand>
        <name>S-adenosyl-L-methionine</name>
        <dbReference type="ChEBI" id="CHEBI:59789"/>
    </ligand>
</feature>
<feature type="binding site" evidence="3">
    <location>
        <position position="184"/>
    </location>
    <ligand>
        <name>a divalent metal cation</name>
        <dbReference type="ChEBI" id="CHEBI:60240"/>
    </ligand>
</feature>
<feature type="binding site" evidence="3">
    <location>
        <position position="185"/>
    </location>
    <ligand>
        <name>a divalent metal cation</name>
        <dbReference type="ChEBI" id="CHEBI:60240"/>
    </ligand>
</feature>
<feature type="binding site" evidence="2">
    <location>
        <position position="189"/>
    </location>
    <ligand>
        <name>substrate</name>
    </ligand>
</feature>
<gene>
    <name type="primary">CCOAOMT3</name>
</gene>
<evidence type="ECO:0000250" key="1"/>
<evidence type="ECO:0000250" key="2">
    <source>
        <dbReference type="UniProtKB" id="Q40313"/>
    </source>
</evidence>
<evidence type="ECO:0000255" key="3">
    <source>
        <dbReference type="PROSITE-ProRule" id="PRU01019"/>
    </source>
</evidence>
<evidence type="ECO:0000269" key="4">
    <source>
    </source>
</evidence>
<organism>
    <name type="scientific">Nicotiana tabacum</name>
    <name type="common">Common tobacco</name>
    <dbReference type="NCBI Taxonomy" id="4097"/>
    <lineage>
        <taxon>Eukaryota</taxon>
        <taxon>Viridiplantae</taxon>
        <taxon>Streptophyta</taxon>
        <taxon>Embryophyta</taxon>
        <taxon>Tracheophyta</taxon>
        <taxon>Spermatophyta</taxon>
        <taxon>Magnoliopsida</taxon>
        <taxon>eudicotyledons</taxon>
        <taxon>Gunneridae</taxon>
        <taxon>Pentapetalae</taxon>
        <taxon>asterids</taxon>
        <taxon>lamiids</taxon>
        <taxon>Solanales</taxon>
        <taxon>Solanaceae</taxon>
        <taxon>Nicotianoideae</taxon>
        <taxon>Nicotianeae</taxon>
        <taxon>Nicotiana</taxon>
    </lineage>
</organism>
<proteinExistence type="evidence at transcript level"/>
<sequence length="242" mass="27237">MATNGENGRHQEVGHKSLLQSDALYQYILETSVYPREPEPMKELREITAKHPWNIMTTSADEGQFLSMLLKLINAKNTMEIGVFTGYSLLATAMALPDDGKILAMDINRDNYEIGLPVIEKAGLAHKIEFKEGPALPVLDQMIEDGKYHGSYDFIFVDADKDNYLNYHKRLIDLVKVGGLIGYDNTLWNGSVVAPPDAPLRKYVRYYRDFVLELNKALAADSRIEICQLPVGDGITLCRRIS</sequence>
<protein>
    <recommendedName>
        <fullName>Caffeoyl-CoA O-methyltransferase 3</fullName>
        <ecNumber>2.1.1.104</ecNumber>
    </recommendedName>
    <alternativeName>
        <fullName>Trans-caffeoyl-CoA 3-O-methyltransferase 3</fullName>
        <shortName>CCoAMT-3</shortName>
        <shortName>CCoAOMT-3</shortName>
    </alternativeName>
</protein>
<reference key="1">
    <citation type="journal article" date="1998" name="Plant Mol. Biol.">
        <title>cDNA cloning, substrate specificity and expression study of tobacco caffeoyl-CoA 3-O-methyltransferase, a lignin biosynthetic enzyme.</title>
        <authorList>
            <person name="Martz F."/>
            <person name="Maury S."/>
            <person name="Pincon G."/>
            <person name="Legrand M."/>
        </authorList>
    </citation>
    <scope>NUCLEOTIDE SEQUENCE [MRNA]</scope>
    <source>
        <strain>cv. Samsun NN</strain>
        <tissue>Leaf</tissue>
    </source>
</reference>
<reference key="2">
    <citation type="journal article" date="1999" name="Plant Physiol.">
        <title>Tobacco O-methyltransferases involved in phenylpropanoid metabolism. The different caffeoyl-coenzyme A/5-hydroxyferuloyl-coenzyme A 3/5-O-methyltransferase and caffeic acid/5-hydroxyferulic acid 3/5-O-methyltransferase classes have distinct substrate specificities and expression patterns.</title>
        <authorList>
            <person name="Maury S."/>
            <person name="Geoffroy P."/>
            <person name="Legrand M."/>
        </authorList>
    </citation>
    <scope>TISSUE SPECIFICITY</scope>
    <scope>INDUCTION</scope>
</reference>
<name>CAMT3_TOBAC</name>